<keyword id="KW-0046">Antibiotic resistance</keyword>
<keyword id="KW-0378">Hydrolase</keyword>
<keyword id="KW-0441">Lipid A biosynthesis</keyword>
<keyword id="KW-0444">Lipid biosynthesis</keyword>
<keyword id="KW-0443">Lipid metabolism</keyword>
<keyword id="KW-0448">Lipopolysaccharide biosynthesis</keyword>
<protein>
    <recommendedName>
        <fullName evidence="1">Probable 4-deoxy-4-formamido-L-arabinose-phosphoundecaprenol deformylase ArnD</fullName>
        <ecNumber evidence="1">3.5.1.n3</ecNumber>
    </recommendedName>
</protein>
<reference key="1">
    <citation type="journal article" date="2004" name="Nat. Genet.">
        <title>Comparison of genome degradation in Paratyphi A and Typhi, human-restricted serovars of Salmonella enterica that cause typhoid.</title>
        <authorList>
            <person name="McClelland M."/>
            <person name="Sanderson K.E."/>
            <person name="Clifton S.W."/>
            <person name="Latreille P."/>
            <person name="Porwollik S."/>
            <person name="Sabo A."/>
            <person name="Meyer R."/>
            <person name="Bieri T."/>
            <person name="Ozersky P."/>
            <person name="McLellan M."/>
            <person name="Harkins C.R."/>
            <person name="Wang C."/>
            <person name="Nguyen C."/>
            <person name="Berghoff A."/>
            <person name="Elliott G."/>
            <person name="Kohlberg S."/>
            <person name="Strong C."/>
            <person name="Du F."/>
            <person name="Carter J."/>
            <person name="Kremizki C."/>
            <person name="Layman D."/>
            <person name="Leonard S."/>
            <person name="Sun H."/>
            <person name="Fulton L."/>
            <person name="Nash W."/>
            <person name="Miner T."/>
            <person name="Minx P."/>
            <person name="Delehaunty K."/>
            <person name="Fronick C."/>
            <person name="Magrini V."/>
            <person name="Nhan M."/>
            <person name="Warren W."/>
            <person name="Florea L."/>
            <person name="Spieth J."/>
            <person name="Wilson R.K."/>
        </authorList>
    </citation>
    <scope>NUCLEOTIDE SEQUENCE [LARGE SCALE GENOMIC DNA]</scope>
    <source>
        <strain>ATCC 9150 / SARB42</strain>
    </source>
</reference>
<sequence>MTKVGLRIDVDTLRGTREGVPRLLATLHRHGVQASFFFSVGPDNMGRHLWRLIKPRFLWKMLRSNAASLYGWDILLAGTAWPGKNIGNANAGIIRETATYHETGLHAWDHHAWQTHSGHWSIRQLEEDIARGITALEAIIGKPVTCSAAAGWRADGRVVRAKEPFNLRYNSDCRGTTLFRPLLMPGQTGTPQIPVTLPTWDEVIGPAVQAQSFNTWIISRMLQDKGTPVYTIHAEVEGIVHQPLFEDLLVRARDAGITFCPLGELLPASPESLPLGQIVRGHIPGREGWLGCQQAVSAS</sequence>
<accession>Q5PNA7</accession>
<dbReference type="EC" id="3.5.1.n3" evidence="1"/>
<dbReference type="EMBL" id="CP000026">
    <property type="protein sequence ID" value="AAV76565.1"/>
    <property type="molecule type" value="Genomic_DNA"/>
</dbReference>
<dbReference type="RefSeq" id="WP_000169759.1">
    <property type="nucleotide sequence ID" value="NC_006511.1"/>
</dbReference>
<dbReference type="SMR" id="Q5PNA7"/>
<dbReference type="KEGG" id="spt:SPA0563"/>
<dbReference type="HOGENOM" id="CLU_084199_0_0_6"/>
<dbReference type="UniPathway" id="UPA00030"/>
<dbReference type="UniPathway" id="UPA00036">
    <property type="reaction ID" value="UER00496"/>
</dbReference>
<dbReference type="Proteomes" id="UP000008185">
    <property type="component" value="Chromosome"/>
</dbReference>
<dbReference type="GO" id="GO:0016020">
    <property type="term" value="C:membrane"/>
    <property type="evidence" value="ECO:0007669"/>
    <property type="project" value="GOC"/>
</dbReference>
<dbReference type="GO" id="GO:0016811">
    <property type="term" value="F:hydrolase activity, acting on carbon-nitrogen (but not peptide) bonds, in linear amides"/>
    <property type="evidence" value="ECO:0007669"/>
    <property type="project" value="UniProtKB-UniRule"/>
</dbReference>
<dbReference type="GO" id="GO:0036108">
    <property type="term" value="P:4-amino-4-deoxy-alpha-L-arabinopyranosyl undecaprenyl phosphate biosynthetic process"/>
    <property type="evidence" value="ECO:0007669"/>
    <property type="project" value="UniProtKB-UniRule"/>
</dbReference>
<dbReference type="GO" id="GO:0009245">
    <property type="term" value="P:lipid A biosynthetic process"/>
    <property type="evidence" value="ECO:0007669"/>
    <property type="project" value="UniProtKB-UniRule"/>
</dbReference>
<dbReference type="GO" id="GO:0009103">
    <property type="term" value="P:lipopolysaccharide biosynthetic process"/>
    <property type="evidence" value="ECO:0007669"/>
    <property type="project" value="UniProtKB-UniRule"/>
</dbReference>
<dbReference type="GO" id="GO:0046677">
    <property type="term" value="P:response to antibiotic"/>
    <property type="evidence" value="ECO:0007669"/>
    <property type="project" value="UniProtKB-KW"/>
</dbReference>
<dbReference type="Gene3D" id="3.20.20.370">
    <property type="entry name" value="Glycoside hydrolase/deacetylase"/>
    <property type="match status" value="1"/>
</dbReference>
<dbReference type="HAMAP" id="MF_01870">
    <property type="entry name" value="ArnD"/>
    <property type="match status" value="1"/>
</dbReference>
<dbReference type="InterPro" id="IPR023557">
    <property type="entry name" value="ArnD"/>
</dbReference>
<dbReference type="InterPro" id="IPR011330">
    <property type="entry name" value="Glyco_hydro/deAcase_b/a-brl"/>
</dbReference>
<dbReference type="InterPro" id="IPR002509">
    <property type="entry name" value="NODB_dom"/>
</dbReference>
<dbReference type="InterPro" id="IPR050248">
    <property type="entry name" value="Polysacc_deacetylase_ArnD"/>
</dbReference>
<dbReference type="NCBIfam" id="NF011923">
    <property type="entry name" value="PRK15394.1"/>
    <property type="match status" value="1"/>
</dbReference>
<dbReference type="PANTHER" id="PTHR10587:SF137">
    <property type="entry name" value="4-DEOXY-4-FORMAMIDO-L-ARABINOSE-PHOSPHOUNDECAPRENOL DEFORMYLASE ARND-RELATED"/>
    <property type="match status" value="1"/>
</dbReference>
<dbReference type="PANTHER" id="PTHR10587">
    <property type="entry name" value="GLYCOSYL TRANSFERASE-RELATED"/>
    <property type="match status" value="1"/>
</dbReference>
<dbReference type="Pfam" id="PF01522">
    <property type="entry name" value="Polysacc_deac_1"/>
    <property type="match status" value="1"/>
</dbReference>
<dbReference type="SUPFAM" id="SSF88713">
    <property type="entry name" value="Glycoside hydrolase/deacetylase"/>
    <property type="match status" value="1"/>
</dbReference>
<dbReference type="PROSITE" id="PS51677">
    <property type="entry name" value="NODB"/>
    <property type="match status" value="1"/>
</dbReference>
<proteinExistence type="inferred from homology"/>
<name>ARND_SALPA</name>
<gene>
    <name evidence="1" type="primary">arnD</name>
    <name type="ordered locus">SPA0563</name>
</gene>
<comment type="function">
    <text evidence="1">Catalyzes the deformylation of 4-deoxy-4-formamido-L-arabinose-phosphoundecaprenol to 4-amino-4-deoxy-L-arabinose-phosphoundecaprenol. The modified arabinose is attached to lipid A and is required for resistance to polymyxin and cationic antimicrobial peptides.</text>
</comment>
<comment type="catalytic activity">
    <reaction evidence="1">
        <text>4-deoxy-4-formamido-alpha-L-arabinopyranosyl di-trans,octa-cis-undecaprenyl phosphate + H2O = 4-amino-4-deoxy-alpha-L-arabinopyranosyl di-trans,octa-cis-undecaprenyl phosphate + formate</text>
        <dbReference type="Rhea" id="RHEA:27734"/>
        <dbReference type="ChEBI" id="CHEBI:15377"/>
        <dbReference type="ChEBI" id="CHEBI:15740"/>
        <dbReference type="ChEBI" id="CHEBI:58909"/>
        <dbReference type="ChEBI" id="CHEBI:60463"/>
        <dbReference type="EC" id="3.5.1.n3"/>
    </reaction>
</comment>
<comment type="pathway">
    <text evidence="1">Glycolipid biosynthesis; 4-amino-4-deoxy-alpha-L-arabinose undecaprenyl phosphate biosynthesis; 4-amino-4-deoxy-alpha-L-arabinose undecaprenyl phosphate from UDP-4-deoxy-4-formamido-beta-L-arabinose and undecaprenyl phosphate: step 2/2.</text>
</comment>
<comment type="pathway">
    <text evidence="1">Bacterial outer membrane biogenesis; lipopolysaccharide biosynthesis.</text>
</comment>
<comment type="similarity">
    <text evidence="1">Belongs to the polysaccharide deacetylase family. ArnD deformylase subfamily.</text>
</comment>
<organism>
    <name type="scientific">Salmonella paratyphi A (strain ATCC 9150 / SARB42)</name>
    <dbReference type="NCBI Taxonomy" id="295319"/>
    <lineage>
        <taxon>Bacteria</taxon>
        <taxon>Pseudomonadati</taxon>
        <taxon>Pseudomonadota</taxon>
        <taxon>Gammaproteobacteria</taxon>
        <taxon>Enterobacterales</taxon>
        <taxon>Enterobacteriaceae</taxon>
        <taxon>Salmonella</taxon>
    </lineage>
</organism>
<evidence type="ECO:0000255" key="1">
    <source>
        <dbReference type="HAMAP-Rule" id="MF_01870"/>
    </source>
</evidence>
<feature type="chain" id="PRO_0000383534" description="Probable 4-deoxy-4-formamido-L-arabinose-phosphoundecaprenol deformylase ArnD">
    <location>
        <begin position="1"/>
        <end position="299"/>
    </location>
</feature>
<feature type="domain" description="NodB homology" evidence="1">
    <location>
        <begin position="2"/>
        <end position="260"/>
    </location>
</feature>